<keyword id="KW-0170">Cobalt</keyword>
<keyword id="KW-0963">Cytoplasm</keyword>
<keyword id="KW-0460">Magnesium</keyword>
<keyword id="KW-0479">Metal-binding</keyword>
<keyword id="KW-0520">NAD</keyword>
<keyword id="KW-0521">NADP</keyword>
<keyword id="KW-0560">Oxidoreductase</keyword>
<keyword id="KW-0664">Pyridoxine biosynthesis</keyword>
<keyword id="KW-0862">Zinc</keyword>
<protein>
    <recommendedName>
        <fullName evidence="1">4-hydroxythreonine-4-phosphate dehydrogenase</fullName>
        <ecNumber evidence="1">1.1.1.262</ecNumber>
    </recommendedName>
    <alternativeName>
        <fullName evidence="1">4-(phosphohydroxy)-L-threonine dehydrogenase</fullName>
    </alternativeName>
</protein>
<comment type="function">
    <text evidence="1">Catalyzes the NAD(P)-dependent oxidation of 4-(phosphooxy)-L-threonine (HTP) into 2-amino-3-oxo-4-(phosphooxy)butyric acid which spontaneously decarboxylates to form 3-amino-2-oxopropyl phosphate (AHAP).</text>
</comment>
<comment type="catalytic activity">
    <reaction evidence="1">
        <text>4-(phosphooxy)-L-threonine + NAD(+) = 3-amino-2-oxopropyl phosphate + CO2 + NADH</text>
        <dbReference type="Rhea" id="RHEA:32275"/>
        <dbReference type="ChEBI" id="CHEBI:16526"/>
        <dbReference type="ChEBI" id="CHEBI:57279"/>
        <dbReference type="ChEBI" id="CHEBI:57540"/>
        <dbReference type="ChEBI" id="CHEBI:57945"/>
        <dbReference type="ChEBI" id="CHEBI:58452"/>
        <dbReference type="EC" id="1.1.1.262"/>
    </reaction>
</comment>
<comment type="cofactor">
    <cofactor evidence="1">
        <name>Zn(2+)</name>
        <dbReference type="ChEBI" id="CHEBI:29105"/>
    </cofactor>
    <cofactor evidence="1">
        <name>Mg(2+)</name>
        <dbReference type="ChEBI" id="CHEBI:18420"/>
    </cofactor>
    <cofactor evidence="1">
        <name>Co(2+)</name>
        <dbReference type="ChEBI" id="CHEBI:48828"/>
    </cofactor>
    <text evidence="1">Binds 1 divalent metal cation per subunit. Can use ions such as Zn(2+), Mg(2+) or Co(2+).</text>
</comment>
<comment type="pathway">
    <text evidence="1">Cofactor biosynthesis; pyridoxine 5'-phosphate biosynthesis; pyridoxine 5'-phosphate from D-erythrose 4-phosphate: step 4/5.</text>
</comment>
<comment type="subunit">
    <text evidence="1">Homodimer.</text>
</comment>
<comment type="subcellular location">
    <subcellularLocation>
        <location evidence="1">Cytoplasm</location>
    </subcellularLocation>
</comment>
<comment type="miscellaneous">
    <text evidence="1">The active site is located at the dimer interface.</text>
</comment>
<comment type="similarity">
    <text evidence="1">Belongs to the PdxA family.</text>
</comment>
<evidence type="ECO:0000255" key="1">
    <source>
        <dbReference type="HAMAP-Rule" id="MF_00536"/>
    </source>
</evidence>
<organism>
    <name type="scientific">Acidithiobacillus ferrooxidans (strain ATCC 53993 / BNL-5-31)</name>
    <name type="common">Leptospirillum ferrooxidans (ATCC 53993)</name>
    <dbReference type="NCBI Taxonomy" id="380394"/>
    <lineage>
        <taxon>Bacteria</taxon>
        <taxon>Pseudomonadati</taxon>
        <taxon>Pseudomonadota</taxon>
        <taxon>Acidithiobacillia</taxon>
        <taxon>Acidithiobacillales</taxon>
        <taxon>Acidithiobacillaceae</taxon>
        <taxon>Acidithiobacillus</taxon>
    </lineage>
</organism>
<proteinExistence type="inferred from homology"/>
<accession>B5EL82</accession>
<name>PDXA_ACIF5</name>
<feature type="chain" id="PRO_1000128235" description="4-hydroxythreonine-4-phosphate dehydrogenase">
    <location>
        <begin position="1"/>
        <end position="333"/>
    </location>
</feature>
<feature type="binding site" evidence="1">
    <location>
        <position position="136"/>
    </location>
    <ligand>
        <name>substrate</name>
    </ligand>
</feature>
<feature type="binding site" evidence="1">
    <location>
        <position position="137"/>
    </location>
    <ligand>
        <name>substrate</name>
    </ligand>
</feature>
<feature type="binding site" evidence="1">
    <location>
        <position position="166"/>
    </location>
    <ligand>
        <name>a divalent metal cation</name>
        <dbReference type="ChEBI" id="CHEBI:60240"/>
        <note>ligand shared between dimeric partners</note>
    </ligand>
</feature>
<feature type="binding site" evidence="1">
    <location>
        <position position="211"/>
    </location>
    <ligand>
        <name>a divalent metal cation</name>
        <dbReference type="ChEBI" id="CHEBI:60240"/>
        <note>ligand shared between dimeric partners</note>
    </ligand>
</feature>
<feature type="binding site" evidence="1">
    <location>
        <position position="266"/>
    </location>
    <ligand>
        <name>a divalent metal cation</name>
        <dbReference type="ChEBI" id="CHEBI:60240"/>
        <note>ligand shared between dimeric partners</note>
    </ligand>
</feature>
<feature type="binding site" evidence="1">
    <location>
        <position position="274"/>
    </location>
    <ligand>
        <name>substrate</name>
    </ligand>
</feature>
<feature type="binding site" evidence="1">
    <location>
        <position position="283"/>
    </location>
    <ligand>
        <name>substrate</name>
    </ligand>
</feature>
<feature type="binding site" evidence="1">
    <location>
        <position position="292"/>
    </location>
    <ligand>
        <name>substrate</name>
    </ligand>
</feature>
<dbReference type="EC" id="1.1.1.262" evidence="1"/>
<dbReference type="EMBL" id="CP001132">
    <property type="protein sequence ID" value="ACH82598.1"/>
    <property type="molecule type" value="Genomic_DNA"/>
</dbReference>
<dbReference type="RefSeq" id="WP_009563457.1">
    <property type="nucleotide sequence ID" value="NC_011206.1"/>
</dbReference>
<dbReference type="SMR" id="B5EL82"/>
<dbReference type="GeneID" id="65279550"/>
<dbReference type="KEGG" id="afe:Lferr_0344"/>
<dbReference type="eggNOG" id="COG1995">
    <property type="taxonomic scope" value="Bacteria"/>
</dbReference>
<dbReference type="HOGENOM" id="CLU_040168_1_0_6"/>
<dbReference type="UniPathway" id="UPA00244">
    <property type="reaction ID" value="UER00312"/>
</dbReference>
<dbReference type="GO" id="GO:0005737">
    <property type="term" value="C:cytoplasm"/>
    <property type="evidence" value="ECO:0007669"/>
    <property type="project" value="UniProtKB-SubCell"/>
</dbReference>
<dbReference type="GO" id="GO:0050570">
    <property type="term" value="F:4-hydroxythreonine-4-phosphate dehydrogenase activity"/>
    <property type="evidence" value="ECO:0007669"/>
    <property type="project" value="UniProtKB-UniRule"/>
</dbReference>
<dbReference type="GO" id="GO:0050897">
    <property type="term" value="F:cobalt ion binding"/>
    <property type="evidence" value="ECO:0007669"/>
    <property type="project" value="UniProtKB-UniRule"/>
</dbReference>
<dbReference type="GO" id="GO:0000287">
    <property type="term" value="F:magnesium ion binding"/>
    <property type="evidence" value="ECO:0007669"/>
    <property type="project" value="UniProtKB-UniRule"/>
</dbReference>
<dbReference type="GO" id="GO:0051287">
    <property type="term" value="F:NAD binding"/>
    <property type="evidence" value="ECO:0007669"/>
    <property type="project" value="InterPro"/>
</dbReference>
<dbReference type="GO" id="GO:0008270">
    <property type="term" value="F:zinc ion binding"/>
    <property type="evidence" value="ECO:0007669"/>
    <property type="project" value="UniProtKB-UniRule"/>
</dbReference>
<dbReference type="GO" id="GO:0042823">
    <property type="term" value="P:pyridoxal phosphate biosynthetic process"/>
    <property type="evidence" value="ECO:0007669"/>
    <property type="project" value="UniProtKB-UniRule"/>
</dbReference>
<dbReference type="GO" id="GO:0008615">
    <property type="term" value="P:pyridoxine biosynthetic process"/>
    <property type="evidence" value="ECO:0007669"/>
    <property type="project" value="UniProtKB-UniRule"/>
</dbReference>
<dbReference type="Gene3D" id="3.40.718.10">
    <property type="entry name" value="Isopropylmalate Dehydrogenase"/>
    <property type="match status" value="1"/>
</dbReference>
<dbReference type="HAMAP" id="MF_00536">
    <property type="entry name" value="PdxA"/>
    <property type="match status" value="1"/>
</dbReference>
<dbReference type="InterPro" id="IPR037510">
    <property type="entry name" value="PdxA"/>
</dbReference>
<dbReference type="InterPro" id="IPR005255">
    <property type="entry name" value="PdxA_fam"/>
</dbReference>
<dbReference type="NCBIfam" id="TIGR00557">
    <property type="entry name" value="pdxA"/>
    <property type="match status" value="1"/>
</dbReference>
<dbReference type="PANTHER" id="PTHR30004">
    <property type="entry name" value="4-HYDROXYTHREONINE-4-PHOSPHATE DEHYDROGENASE"/>
    <property type="match status" value="1"/>
</dbReference>
<dbReference type="PANTHER" id="PTHR30004:SF5">
    <property type="entry name" value="4-HYDROXYTHREONINE-4-PHOSPHATE DEHYDROGENASE"/>
    <property type="match status" value="1"/>
</dbReference>
<dbReference type="Pfam" id="PF04166">
    <property type="entry name" value="PdxA"/>
    <property type="match status" value="1"/>
</dbReference>
<dbReference type="SUPFAM" id="SSF53659">
    <property type="entry name" value="Isocitrate/Isopropylmalate dehydrogenase-like"/>
    <property type="match status" value="1"/>
</dbReference>
<reference key="1">
    <citation type="submission" date="2008-08" db="EMBL/GenBank/DDBJ databases">
        <title>Complete sequence of Acidithiobacillus ferrooxidans ATCC 53993.</title>
        <authorList>
            <person name="Lucas S."/>
            <person name="Copeland A."/>
            <person name="Lapidus A."/>
            <person name="Glavina del Rio T."/>
            <person name="Dalin E."/>
            <person name="Tice H."/>
            <person name="Bruce D."/>
            <person name="Goodwin L."/>
            <person name="Pitluck S."/>
            <person name="Sims D."/>
            <person name="Brettin T."/>
            <person name="Detter J.C."/>
            <person name="Han C."/>
            <person name="Kuske C.R."/>
            <person name="Larimer F."/>
            <person name="Land M."/>
            <person name="Hauser L."/>
            <person name="Kyrpides N."/>
            <person name="Lykidis A."/>
            <person name="Borole A.P."/>
        </authorList>
    </citation>
    <scope>NUCLEOTIDE SEQUENCE [LARGE SCALE GENOMIC DNA]</scope>
    <source>
        <strain>ATCC 53993 / BNL-5-31</strain>
    </source>
</reference>
<gene>
    <name evidence="1" type="primary">pdxA</name>
    <name type="ordered locus">Lferr_0344</name>
</gene>
<sequence length="333" mass="35007">MITEPRLLLTVGEPAGIGPDICLQLAFHALPSGVLLIGDLHCLRSRALTLGLSLRLEPWLEGNPWPALERGVLHVLDVPLAQPCRPGRLDMANAPAVLATLDKAMHLLRAGAADALVTAPVHKGIINDAGIPFTGHTEYLAAACGSPKVVMLLAGRGLRVALATTHLPLAQVAAAVTQEGLEGTLRILHRALREDFALSEPRILVAGLNPHAGEGGHLGHEEQDVIAPVIAALQGESLRISGPWPADTLFTPRLLEDADAVLAMYHDQGLPVLKYHAFGEAVNITLGLPIVRTSVDHGTALDIAGTGRAEGGSLLRALDNAAEIVRNRRAAGC</sequence>